<protein>
    <recommendedName>
        <fullName>Tubulin gamma chain</fullName>
    </recommendedName>
    <alternativeName>
        <fullName>Gamma-tubulin</fullName>
    </alternativeName>
</protein>
<name>TBG_CANAX</name>
<accession>O93807</accession>
<evidence type="ECO:0000255" key="1"/>
<evidence type="ECO:0000256" key="2">
    <source>
        <dbReference type="SAM" id="MobiDB-lite"/>
    </source>
</evidence>
<evidence type="ECO:0000305" key="3"/>
<proteinExistence type="evidence at protein level"/>
<dbReference type="EMBL" id="AB017784">
    <property type="protein sequence ID" value="BAA74797.1"/>
    <property type="molecule type" value="Genomic_DNA"/>
</dbReference>
<dbReference type="PDB" id="7ANZ">
    <property type="method" value="EM"/>
    <property type="resolution" value="3.60 A"/>
    <property type="chains" value="A/B=1-502"/>
</dbReference>
<dbReference type="PDBsum" id="7ANZ"/>
<dbReference type="EMDB" id="EMD-11835"/>
<dbReference type="SMR" id="O93807"/>
<dbReference type="ChEMBL" id="CHEMBL3988634"/>
<dbReference type="EnsemblFungi" id="C4_05570C_A-T">
    <property type="protein sequence ID" value="C4_05570C_A-T-p1"/>
    <property type="gene ID" value="C4_05570C_A"/>
</dbReference>
<dbReference type="VEuPathDB" id="FungiDB:C4_05570C_A"/>
<dbReference type="VEuPathDB" id="FungiDB:CAWG_03265"/>
<dbReference type="GO" id="GO:0005737">
    <property type="term" value="C:cytoplasm"/>
    <property type="evidence" value="ECO:0007669"/>
    <property type="project" value="UniProtKB-KW"/>
</dbReference>
<dbReference type="GO" id="GO:0008275">
    <property type="term" value="C:gamma-tubulin small complex"/>
    <property type="evidence" value="ECO:0007669"/>
    <property type="project" value="EnsemblFungi"/>
</dbReference>
<dbReference type="GO" id="GO:0005822">
    <property type="term" value="C:inner plaque of spindle pole body"/>
    <property type="evidence" value="ECO:0007669"/>
    <property type="project" value="EnsemblFungi"/>
</dbReference>
<dbReference type="GO" id="GO:0005874">
    <property type="term" value="C:microtubule"/>
    <property type="evidence" value="ECO:0007669"/>
    <property type="project" value="UniProtKB-KW"/>
</dbReference>
<dbReference type="GO" id="GO:0005824">
    <property type="term" value="C:outer plaque of spindle pole body"/>
    <property type="evidence" value="ECO:0007669"/>
    <property type="project" value="EnsemblFungi"/>
</dbReference>
<dbReference type="GO" id="GO:0005525">
    <property type="term" value="F:GTP binding"/>
    <property type="evidence" value="ECO:0007669"/>
    <property type="project" value="UniProtKB-KW"/>
</dbReference>
<dbReference type="GO" id="GO:0005200">
    <property type="term" value="F:structural constituent of cytoskeleton"/>
    <property type="evidence" value="ECO:0007669"/>
    <property type="project" value="EnsemblFungi"/>
</dbReference>
<dbReference type="GO" id="GO:0031122">
    <property type="term" value="P:cytoplasmic microtubule organization"/>
    <property type="evidence" value="ECO:0007669"/>
    <property type="project" value="InterPro"/>
</dbReference>
<dbReference type="GO" id="GO:0051417">
    <property type="term" value="P:microtubule nucleation by spindle pole body"/>
    <property type="evidence" value="ECO:0007669"/>
    <property type="project" value="EnsemblFungi"/>
</dbReference>
<dbReference type="GO" id="GO:0007052">
    <property type="term" value="P:mitotic spindle organization"/>
    <property type="evidence" value="ECO:0007669"/>
    <property type="project" value="EnsemblFungi"/>
</dbReference>
<dbReference type="GO" id="GO:2000767">
    <property type="term" value="P:positive regulation of cytoplasmic translation"/>
    <property type="evidence" value="ECO:0007669"/>
    <property type="project" value="EnsemblFungi"/>
</dbReference>
<dbReference type="CDD" id="cd02188">
    <property type="entry name" value="gamma_tubulin"/>
    <property type="match status" value="1"/>
</dbReference>
<dbReference type="FunFam" id="3.40.50.1440:FF:000062">
    <property type="entry name" value="Tubulin gamma chain"/>
    <property type="match status" value="1"/>
</dbReference>
<dbReference type="Gene3D" id="1.10.287.600">
    <property type="entry name" value="Helix hairpin bin"/>
    <property type="match status" value="1"/>
</dbReference>
<dbReference type="Gene3D" id="3.40.50.1440">
    <property type="entry name" value="Tubulin/FtsZ, GTPase domain"/>
    <property type="match status" value="1"/>
</dbReference>
<dbReference type="InterPro" id="IPR002454">
    <property type="entry name" value="Gamma_tubulin"/>
</dbReference>
<dbReference type="InterPro" id="IPR008280">
    <property type="entry name" value="Tub_FtsZ_C"/>
</dbReference>
<dbReference type="InterPro" id="IPR000217">
    <property type="entry name" value="Tubulin"/>
</dbReference>
<dbReference type="InterPro" id="IPR018316">
    <property type="entry name" value="Tubulin/FtsZ_2-layer-sand-dom"/>
</dbReference>
<dbReference type="InterPro" id="IPR036525">
    <property type="entry name" value="Tubulin/FtsZ_GTPase_sf"/>
</dbReference>
<dbReference type="InterPro" id="IPR023123">
    <property type="entry name" value="Tubulin_C"/>
</dbReference>
<dbReference type="InterPro" id="IPR017975">
    <property type="entry name" value="Tubulin_CS"/>
</dbReference>
<dbReference type="InterPro" id="IPR003008">
    <property type="entry name" value="Tubulin_FtsZ_GTPase"/>
</dbReference>
<dbReference type="PANTHER" id="PTHR11588">
    <property type="entry name" value="TUBULIN"/>
    <property type="match status" value="1"/>
</dbReference>
<dbReference type="Pfam" id="PF00091">
    <property type="entry name" value="Tubulin"/>
    <property type="match status" value="1"/>
</dbReference>
<dbReference type="Pfam" id="PF03953">
    <property type="entry name" value="Tubulin_C"/>
    <property type="match status" value="1"/>
</dbReference>
<dbReference type="PRINTS" id="PR01164">
    <property type="entry name" value="GAMMATUBULIN"/>
</dbReference>
<dbReference type="PRINTS" id="PR01161">
    <property type="entry name" value="TUBULIN"/>
</dbReference>
<dbReference type="SMART" id="SM00864">
    <property type="entry name" value="Tubulin"/>
    <property type="match status" value="1"/>
</dbReference>
<dbReference type="SUPFAM" id="SSF55307">
    <property type="entry name" value="Tubulin C-terminal domain-like"/>
    <property type="match status" value="1"/>
</dbReference>
<dbReference type="SUPFAM" id="SSF52490">
    <property type="entry name" value="Tubulin nucleotide-binding domain-like"/>
    <property type="match status" value="1"/>
</dbReference>
<dbReference type="PROSITE" id="PS00227">
    <property type="entry name" value="TUBULIN"/>
    <property type="match status" value="1"/>
</dbReference>
<reference key="1">
    <citation type="submission" date="1998-09" db="EMBL/GenBank/DDBJ databases">
        <title>A divergent gamma-tubulin gene of the yeast Candida albicans.</title>
        <authorList>
            <person name="Akashi T."/>
        </authorList>
    </citation>
    <scope>NUCLEOTIDE SEQUENCE [GENOMIC DNA]</scope>
</reference>
<keyword id="KW-0002">3D-structure</keyword>
<keyword id="KW-0963">Cytoplasm</keyword>
<keyword id="KW-0206">Cytoskeleton</keyword>
<keyword id="KW-0342">GTP-binding</keyword>
<keyword id="KW-0493">Microtubule</keyword>
<keyword id="KW-0547">Nucleotide-binding</keyword>
<comment type="function">
    <text>Tubulin is the major constituent of microtubules. The gamma chain is found at microtubule organizing centers (MTOC) such as the spindle poles or the centrosome, suggesting that it is involved in the minus-end nucleation of microtubule assembly.</text>
</comment>
<comment type="subcellular location">
    <subcellularLocation>
        <location evidence="3">Cytoplasm</location>
        <location evidence="3">Cytoskeleton</location>
        <location evidence="3">Microtubule organizing center</location>
        <location evidence="3">Spindle pole body</location>
    </subcellularLocation>
</comment>
<comment type="similarity">
    <text evidence="3">Belongs to the tubulin family.</text>
</comment>
<organism>
    <name type="scientific">Candida albicans</name>
    <name type="common">Yeast</name>
    <dbReference type="NCBI Taxonomy" id="5476"/>
    <lineage>
        <taxon>Eukaryota</taxon>
        <taxon>Fungi</taxon>
        <taxon>Dikarya</taxon>
        <taxon>Ascomycota</taxon>
        <taxon>Saccharomycotina</taxon>
        <taxon>Pichiomycetes</taxon>
        <taxon>Debaryomycetaceae</taxon>
        <taxon>Candida/Lodderomyces clade</taxon>
        <taxon>Candida</taxon>
    </lineage>
</organism>
<sequence length="502" mass="56481">MPGETITLQVGQCGNQVGLQYWQQLATEHGIQSDGSSTPYPKDINDLQLQELNNSGSSPQSYPQQTKPNGKYRNDHPELFFTLSDSNTYTPRSILIDMEPSVIAKSTSALPMFNPRNVHLSNQGNGAANNWINGYKYGTEEEETLLNLIDREVDKCDNLSNFQLFHSVAGGTGSGVGSKMLEVISDRYGHKKLLNTFSIFPSNEDTSDVVVQPYNTILTLKRLIDYSDATFVFHNDSLNRIENILFNNNSNIQHDDNDLFLGANKLIALVSASVSNPLRFPGYMYSSMESIVSNLIPTPDLKFLTSSIAPFSTQKHNYLNEYDMLLELSNDRYKTNRVGGDTSYISMLNYLIGYNLDQREIRKGILKSQQRISFVPWVARSVLVVHGKKSPYLKNTNLEGIQVTNNTSMIDVFTKILKQFDLLIKRKAYLNRYYSSVEEENEVMEMFNESRESVKSIIDEYKACKEITYLDDDDEDDLEDGDGGGGGNGNGYNNIDDADMGI</sequence>
<feature type="chain" id="PRO_0000048449" description="Tubulin gamma chain">
    <location>
        <begin position="1"/>
        <end position="502"/>
    </location>
</feature>
<feature type="region of interest" description="Disordered" evidence="2">
    <location>
        <begin position="51"/>
        <end position="73"/>
    </location>
</feature>
<feature type="region of interest" description="Disordered" evidence="2">
    <location>
        <begin position="473"/>
        <end position="502"/>
    </location>
</feature>
<feature type="compositionally biased region" description="Polar residues" evidence="2">
    <location>
        <begin position="51"/>
        <end position="68"/>
    </location>
</feature>
<feature type="compositionally biased region" description="Acidic residues" evidence="2">
    <location>
        <begin position="473"/>
        <end position="482"/>
    </location>
</feature>
<feature type="binding site" evidence="1">
    <location>
        <begin position="169"/>
        <end position="175"/>
    </location>
    <ligand>
        <name>GTP</name>
        <dbReference type="ChEBI" id="CHEBI:37565"/>
    </ligand>
</feature>
<gene>
    <name type="primary">TUB4</name>
</gene>